<comment type="function">
    <text evidence="1">With S4 and S12 plays an important role in translational accuracy.</text>
</comment>
<comment type="function">
    <text evidence="1">Located at the back of the 30S subunit body where it stabilizes the conformation of the head with respect to the body.</text>
</comment>
<comment type="subunit">
    <text evidence="1">Part of the 30S ribosomal subunit. Contacts proteins S4 and S8.</text>
</comment>
<comment type="domain">
    <text>The N-terminal domain interacts with the head of the 30S subunit; the C-terminal domain interacts with the body and contacts protein S4. The interaction surface between S4 and S5 is involved in control of translational fidelity.</text>
</comment>
<comment type="similarity">
    <text evidence="1">Belongs to the universal ribosomal protein uS5 family.</text>
</comment>
<gene>
    <name evidence="1" type="primary">rpsE</name>
    <name type="ordered locus">UUR10_0243</name>
</gene>
<keyword id="KW-0687">Ribonucleoprotein</keyword>
<keyword id="KW-0689">Ribosomal protein</keyword>
<keyword id="KW-0694">RNA-binding</keyword>
<keyword id="KW-0699">rRNA-binding</keyword>
<reference key="1">
    <citation type="submission" date="2008-10" db="EMBL/GenBank/DDBJ databases">
        <title>Genome sequence of Ureaplasma urealyticum serovar 10 ATCC-33699.</title>
        <authorList>
            <person name="Shrivastava S."/>
            <person name="Methe B.A."/>
            <person name="Glass J."/>
            <person name="White K."/>
            <person name="Duffy L.B."/>
        </authorList>
    </citation>
    <scope>NUCLEOTIDE SEQUENCE [LARGE SCALE GENOMIC DNA]</scope>
    <source>
        <strain>ATCC 33699 / Western</strain>
    </source>
</reference>
<dbReference type="EMBL" id="CP001184">
    <property type="protein sequence ID" value="ACI59998.1"/>
    <property type="molecule type" value="Genomic_DNA"/>
</dbReference>
<dbReference type="RefSeq" id="WP_004026225.1">
    <property type="nucleotide sequence ID" value="NC_011374.1"/>
</dbReference>
<dbReference type="SMR" id="B5ZB57"/>
<dbReference type="STRING" id="565575.UUR10_0243"/>
<dbReference type="GeneID" id="93848723"/>
<dbReference type="KEGG" id="uue:UUR10_0243"/>
<dbReference type="eggNOG" id="COG0098">
    <property type="taxonomic scope" value="Bacteria"/>
</dbReference>
<dbReference type="HOGENOM" id="CLU_065898_2_1_14"/>
<dbReference type="OrthoDB" id="9809045at2"/>
<dbReference type="Proteomes" id="UP000002018">
    <property type="component" value="Chromosome"/>
</dbReference>
<dbReference type="GO" id="GO:0015935">
    <property type="term" value="C:small ribosomal subunit"/>
    <property type="evidence" value="ECO:0007669"/>
    <property type="project" value="InterPro"/>
</dbReference>
<dbReference type="GO" id="GO:0019843">
    <property type="term" value="F:rRNA binding"/>
    <property type="evidence" value="ECO:0007669"/>
    <property type="project" value="UniProtKB-UniRule"/>
</dbReference>
<dbReference type="GO" id="GO:0003735">
    <property type="term" value="F:structural constituent of ribosome"/>
    <property type="evidence" value="ECO:0007669"/>
    <property type="project" value="InterPro"/>
</dbReference>
<dbReference type="GO" id="GO:0006412">
    <property type="term" value="P:translation"/>
    <property type="evidence" value="ECO:0007669"/>
    <property type="project" value="UniProtKB-UniRule"/>
</dbReference>
<dbReference type="FunFam" id="3.30.160.20:FF:000001">
    <property type="entry name" value="30S ribosomal protein S5"/>
    <property type="match status" value="1"/>
</dbReference>
<dbReference type="FunFam" id="3.30.230.10:FF:000002">
    <property type="entry name" value="30S ribosomal protein S5"/>
    <property type="match status" value="1"/>
</dbReference>
<dbReference type="Gene3D" id="3.30.160.20">
    <property type="match status" value="1"/>
</dbReference>
<dbReference type="Gene3D" id="3.30.230.10">
    <property type="match status" value="1"/>
</dbReference>
<dbReference type="HAMAP" id="MF_01307_B">
    <property type="entry name" value="Ribosomal_uS5_B"/>
    <property type="match status" value="1"/>
</dbReference>
<dbReference type="InterPro" id="IPR020568">
    <property type="entry name" value="Ribosomal_Su5_D2-typ_SF"/>
</dbReference>
<dbReference type="InterPro" id="IPR000851">
    <property type="entry name" value="Ribosomal_uS5"/>
</dbReference>
<dbReference type="InterPro" id="IPR005712">
    <property type="entry name" value="Ribosomal_uS5_bac-type"/>
</dbReference>
<dbReference type="InterPro" id="IPR005324">
    <property type="entry name" value="Ribosomal_uS5_C"/>
</dbReference>
<dbReference type="InterPro" id="IPR013810">
    <property type="entry name" value="Ribosomal_uS5_N"/>
</dbReference>
<dbReference type="InterPro" id="IPR018192">
    <property type="entry name" value="Ribosomal_uS5_N_CS"/>
</dbReference>
<dbReference type="InterPro" id="IPR014721">
    <property type="entry name" value="Ribsml_uS5_D2-typ_fold_subgr"/>
</dbReference>
<dbReference type="NCBIfam" id="TIGR01021">
    <property type="entry name" value="rpsE_bact"/>
    <property type="match status" value="1"/>
</dbReference>
<dbReference type="PANTHER" id="PTHR48277">
    <property type="entry name" value="MITOCHONDRIAL RIBOSOMAL PROTEIN S5"/>
    <property type="match status" value="1"/>
</dbReference>
<dbReference type="PANTHER" id="PTHR48277:SF1">
    <property type="entry name" value="MITOCHONDRIAL RIBOSOMAL PROTEIN S5"/>
    <property type="match status" value="1"/>
</dbReference>
<dbReference type="Pfam" id="PF00333">
    <property type="entry name" value="Ribosomal_S5"/>
    <property type="match status" value="1"/>
</dbReference>
<dbReference type="Pfam" id="PF03719">
    <property type="entry name" value="Ribosomal_S5_C"/>
    <property type="match status" value="1"/>
</dbReference>
<dbReference type="SUPFAM" id="SSF54768">
    <property type="entry name" value="dsRNA-binding domain-like"/>
    <property type="match status" value="1"/>
</dbReference>
<dbReference type="SUPFAM" id="SSF54211">
    <property type="entry name" value="Ribosomal protein S5 domain 2-like"/>
    <property type="match status" value="1"/>
</dbReference>
<dbReference type="PROSITE" id="PS00585">
    <property type="entry name" value="RIBOSOMAL_S5"/>
    <property type="match status" value="1"/>
</dbReference>
<dbReference type="PROSITE" id="PS50881">
    <property type="entry name" value="S5_DSRBD"/>
    <property type="match status" value="1"/>
</dbReference>
<sequence>MENNVKKETIVDSEKVEKQQPVTAPVVNKKENTQPKAKTFKRETTTSNFEERVVKIKRISKTTKGGRMMRFSALVVIGDKNGTVGFGMGKSIEVPDAIKKAIKNANNNLIKVKQTKKGSIYHDVNGRHGAAKVMLLPAPEGTGIIAGGPVRAVVELAGFTDIYTKSRGANAPMNVIRATINGLLQQLTPQEIARLRDKSLKEL</sequence>
<organism>
    <name type="scientific">Ureaplasma urealyticum serovar 10 (strain ATCC 33699 / Western)</name>
    <dbReference type="NCBI Taxonomy" id="565575"/>
    <lineage>
        <taxon>Bacteria</taxon>
        <taxon>Bacillati</taxon>
        <taxon>Mycoplasmatota</taxon>
        <taxon>Mycoplasmoidales</taxon>
        <taxon>Mycoplasmoidaceae</taxon>
        <taxon>Ureaplasma</taxon>
    </lineage>
</organism>
<name>RS5_UREU1</name>
<evidence type="ECO:0000255" key="1">
    <source>
        <dbReference type="HAMAP-Rule" id="MF_01307"/>
    </source>
</evidence>
<evidence type="ECO:0000256" key="2">
    <source>
        <dbReference type="SAM" id="MobiDB-lite"/>
    </source>
</evidence>
<evidence type="ECO:0000305" key="3"/>
<feature type="chain" id="PRO_1000140903" description="Small ribosomal subunit protein uS5">
    <location>
        <begin position="1"/>
        <end position="203"/>
    </location>
</feature>
<feature type="domain" description="S5 DRBM" evidence="1">
    <location>
        <begin position="49"/>
        <end position="112"/>
    </location>
</feature>
<feature type="region of interest" description="Disordered" evidence="2">
    <location>
        <begin position="1"/>
        <end position="36"/>
    </location>
</feature>
<feature type="compositionally biased region" description="Basic and acidic residues" evidence="2">
    <location>
        <begin position="1"/>
        <end position="18"/>
    </location>
</feature>
<protein>
    <recommendedName>
        <fullName evidence="1">Small ribosomal subunit protein uS5</fullName>
    </recommendedName>
    <alternativeName>
        <fullName evidence="3">30S ribosomal protein S5</fullName>
    </alternativeName>
</protein>
<proteinExistence type="inferred from homology"/>
<accession>B5ZB57</accession>